<gene>
    <name type="primary">GNRH1</name>
    <name type="synonym">GNRH</name>
</gene>
<reference key="1">
    <citation type="submission" date="1994-05" db="EMBL/GenBank/DDBJ databases">
        <authorList>
            <person name="Weesner G.D."/>
            <person name="Matteri R.L."/>
            <person name="Becker B.A."/>
        </authorList>
    </citation>
    <scope>NUCLEOTIDE SEQUENCE [MRNA]</scope>
    <source>
        <tissue>Hypothalamus</tissue>
    </source>
</reference>
<reference key="2">
    <citation type="journal article" date="1971" name="Biochem. Biophys. Res. Commun.">
        <title>Structure of the porcine LH- and FSH-releasing hormone. II. Confirmation of the proposed structure by conventional sequential analyses.</title>
        <authorList>
            <person name="Baba Y."/>
            <person name="Matsuo H."/>
            <person name="Schally A.V."/>
        </authorList>
    </citation>
    <scope>PROTEIN SEQUENCE OF 24-33</scope>
    <scope>PYROGLUTAMATE FORMATION AT GLN-24</scope>
    <scope>AMIDATION AT GLY-33</scope>
</reference>
<reference key="3">
    <citation type="journal article" date="1971" name="Biochem. Biophys. Res. Commun.">
        <title>Synthesis of the porcine LH- and FSH-releasing hormone by the solid-phase method.</title>
        <authorList>
            <person name="Matsuo H."/>
            <person name="Arimura A."/>
            <person name="Nair R.M.G."/>
            <person name="Schally A.V."/>
        </authorList>
    </citation>
    <scope>SYNTHESIS OF GONADOLIBERIN</scope>
</reference>
<reference key="4">
    <citation type="journal article" date="1971" name="Biochem. Biophys. Res. Commun.">
        <title>On the tryptophan residue in porcine LH and FSH-releasing hormone.</title>
        <authorList>
            <person name="Baba Y."/>
            <person name="Arimura A."/>
            <person name="Schally A.V."/>
        </authorList>
    </citation>
    <scope>SYNTHESIS OF GONADOLIBERIN</scope>
</reference>
<accession>P49921</accession>
<sequence>MEPIPKLLAGLLLLTLCVVGCSSQHWSYGLRPGGKRNAENVIDSFQEMAKEVARLAEPQRFECTAHQPRSPLRDLKGALESLIEEETGQKT</sequence>
<evidence type="ECO:0000250" key="1">
    <source>
        <dbReference type="UniProtKB" id="P01148"/>
    </source>
</evidence>
<evidence type="ECO:0000269" key="2">
    <source>
    </source>
</evidence>
<evidence type="ECO:0000305" key="3"/>
<name>GON1_PIG</name>
<dbReference type="EMBL" id="L32864">
    <property type="protein sequence ID" value="AAA31066.1"/>
    <property type="molecule type" value="mRNA"/>
</dbReference>
<dbReference type="PIR" id="A01411">
    <property type="entry name" value="RHPGG"/>
</dbReference>
<dbReference type="RefSeq" id="NP_999439.1">
    <property type="nucleotide sequence ID" value="NM_214274.1"/>
</dbReference>
<dbReference type="RefSeq" id="XP_005670498.1">
    <property type="nucleotide sequence ID" value="XM_005670441.2"/>
</dbReference>
<dbReference type="SMR" id="P49921"/>
<dbReference type="FunCoup" id="P49921">
    <property type="interactions" value="73"/>
</dbReference>
<dbReference type="STRING" id="9823.ENSSSCP00000010305"/>
<dbReference type="PaxDb" id="9823-ENSSSCP00000010305"/>
<dbReference type="Ensembl" id="ENSSSCT00000010581.3">
    <property type="protein sequence ID" value="ENSSSCP00000010305.1"/>
    <property type="gene ID" value="ENSSSCG00000009651.4"/>
</dbReference>
<dbReference type="Ensembl" id="ENSSSCT00030012984.1">
    <property type="protein sequence ID" value="ENSSSCP00030005842.1"/>
    <property type="gene ID" value="ENSSSCG00030009477.1"/>
</dbReference>
<dbReference type="Ensembl" id="ENSSSCT00035011319.1">
    <property type="protein sequence ID" value="ENSSSCP00035003870.1"/>
    <property type="gene ID" value="ENSSSCG00035009035.1"/>
</dbReference>
<dbReference type="Ensembl" id="ENSSSCT00040106151.1">
    <property type="protein sequence ID" value="ENSSSCP00040048746.1"/>
    <property type="gene ID" value="ENSSSCG00040076253.1"/>
</dbReference>
<dbReference type="Ensembl" id="ENSSSCT00045041719.1">
    <property type="protein sequence ID" value="ENSSSCP00045028941.1"/>
    <property type="gene ID" value="ENSSSCG00045024471.1"/>
</dbReference>
<dbReference type="Ensembl" id="ENSSSCT00050082815.1">
    <property type="protein sequence ID" value="ENSSSCP00050035545.1"/>
    <property type="gene ID" value="ENSSSCG00050060777.1"/>
</dbReference>
<dbReference type="Ensembl" id="ENSSSCT00065039511.1">
    <property type="protein sequence ID" value="ENSSSCP00065016723.1"/>
    <property type="gene ID" value="ENSSSCG00065029275.1"/>
</dbReference>
<dbReference type="Ensembl" id="ENSSSCT00070046735.1">
    <property type="protein sequence ID" value="ENSSSCP00070039423.1"/>
    <property type="gene ID" value="ENSSSCG00070023452.1"/>
</dbReference>
<dbReference type="Ensembl" id="ENSSSCT00115004043">
    <property type="protein sequence ID" value="ENSSSCP00115003723"/>
    <property type="gene ID" value="ENSSSCG00115002426"/>
</dbReference>
<dbReference type="GeneID" id="397516"/>
<dbReference type="KEGG" id="ssc:397516"/>
<dbReference type="CTD" id="2796"/>
<dbReference type="VGNC" id="VGNC:88548">
    <property type="gene designation" value="GNRH1"/>
</dbReference>
<dbReference type="eggNOG" id="ENOG502S8C8">
    <property type="taxonomic scope" value="Eukaryota"/>
</dbReference>
<dbReference type="GeneTree" id="ENSGT00390000008225"/>
<dbReference type="HOGENOM" id="CLU_2412553_0_0_1"/>
<dbReference type="InParanoid" id="P49921"/>
<dbReference type="OMA" id="FECTVHQ"/>
<dbReference type="OrthoDB" id="8716567at2759"/>
<dbReference type="TreeFam" id="TF330934"/>
<dbReference type="Reactome" id="R-SSC-375281">
    <property type="pathway name" value="Hormone ligand-binding receptors"/>
</dbReference>
<dbReference type="Reactome" id="R-SSC-416476">
    <property type="pathway name" value="G alpha (q) signalling events"/>
</dbReference>
<dbReference type="Proteomes" id="UP000008227">
    <property type="component" value="Chromosome 14"/>
</dbReference>
<dbReference type="Proteomes" id="UP000314985">
    <property type="component" value="Chromosome 14"/>
</dbReference>
<dbReference type="Proteomes" id="UP000694570">
    <property type="component" value="Unplaced"/>
</dbReference>
<dbReference type="Proteomes" id="UP000694571">
    <property type="component" value="Unplaced"/>
</dbReference>
<dbReference type="Proteomes" id="UP000694720">
    <property type="component" value="Unplaced"/>
</dbReference>
<dbReference type="Proteomes" id="UP000694722">
    <property type="component" value="Unplaced"/>
</dbReference>
<dbReference type="Proteomes" id="UP000694723">
    <property type="component" value="Unplaced"/>
</dbReference>
<dbReference type="Proteomes" id="UP000694724">
    <property type="component" value="Unplaced"/>
</dbReference>
<dbReference type="Proteomes" id="UP000694725">
    <property type="component" value="Unplaced"/>
</dbReference>
<dbReference type="Proteomes" id="UP000694726">
    <property type="component" value="Unplaced"/>
</dbReference>
<dbReference type="Proteomes" id="UP000694727">
    <property type="component" value="Unplaced"/>
</dbReference>
<dbReference type="Proteomes" id="UP000694728">
    <property type="component" value="Unplaced"/>
</dbReference>
<dbReference type="Bgee" id="ENSSSCG00000009651">
    <property type="expression patterns" value="Expressed in caecum and 28 other cell types or tissues"/>
</dbReference>
<dbReference type="ExpressionAtlas" id="P49921">
    <property type="expression patterns" value="baseline"/>
</dbReference>
<dbReference type="GO" id="GO:0005615">
    <property type="term" value="C:extracellular space"/>
    <property type="evidence" value="ECO:0000250"/>
    <property type="project" value="UniProtKB"/>
</dbReference>
<dbReference type="GO" id="GO:0005183">
    <property type="term" value="F:gonadotropin hormone-releasing hormone activity"/>
    <property type="evidence" value="ECO:0000318"/>
    <property type="project" value="GO_Central"/>
</dbReference>
<dbReference type="GO" id="GO:0031530">
    <property type="term" value="F:gonadotropin-releasing hormone receptor binding"/>
    <property type="evidence" value="ECO:0000318"/>
    <property type="project" value="GO_Central"/>
</dbReference>
<dbReference type="GO" id="GO:0023051">
    <property type="term" value="P:regulation of signaling"/>
    <property type="evidence" value="ECO:0000318"/>
    <property type="project" value="GO_Central"/>
</dbReference>
<dbReference type="InterPro" id="IPR002012">
    <property type="entry name" value="GnRH"/>
</dbReference>
<dbReference type="InterPro" id="IPR019792">
    <property type="entry name" value="Gonadoliberin"/>
</dbReference>
<dbReference type="InterPro" id="IPR004079">
    <property type="entry name" value="Gonadoliberin_I_precursor"/>
</dbReference>
<dbReference type="PANTHER" id="PTHR10522">
    <property type="entry name" value="GONADOLIBERIN"/>
    <property type="match status" value="1"/>
</dbReference>
<dbReference type="PANTHER" id="PTHR10522:SF0">
    <property type="entry name" value="PROGONADOLIBERIN-1"/>
    <property type="match status" value="1"/>
</dbReference>
<dbReference type="Pfam" id="PF00446">
    <property type="entry name" value="GnRH"/>
    <property type="match status" value="1"/>
</dbReference>
<dbReference type="PRINTS" id="PR01541">
    <property type="entry name" value="GONADOLIBRNI"/>
</dbReference>
<dbReference type="PROSITE" id="PS00473">
    <property type="entry name" value="GNRH"/>
    <property type="match status" value="1"/>
</dbReference>
<keyword id="KW-0027">Amidation</keyword>
<keyword id="KW-0165">Cleavage on pair of basic residues</keyword>
<keyword id="KW-0903">Direct protein sequencing</keyword>
<keyword id="KW-0372">Hormone</keyword>
<keyword id="KW-0873">Pyrrolidone carboxylic acid</keyword>
<keyword id="KW-1185">Reference proteome</keyword>
<keyword id="KW-0964">Secreted</keyword>
<keyword id="KW-0732">Signal</keyword>
<feature type="signal peptide" evidence="2">
    <location>
        <begin position="1"/>
        <end position="23"/>
    </location>
</feature>
<feature type="chain" id="PRO_0000012407" description="Progonadoliberin-1">
    <location>
        <begin position="24"/>
        <end position="91"/>
    </location>
</feature>
<feature type="peptide" id="PRO_0000012408" description="Gonadoliberin-1">
    <location>
        <begin position="24"/>
        <end position="33"/>
    </location>
</feature>
<feature type="peptide" id="PRO_0000012409" description="GnRH-associated peptide 1">
    <location>
        <begin position="34"/>
        <end position="91"/>
    </location>
</feature>
<feature type="site" description="Cleavage; by ACE" evidence="1">
    <location>
        <begin position="26"/>
        <end position="27"/>
    </location>
</feature>
<feature type="site" description="Appears to be essential for biological activity">
    <location>
        <position position="26"/>
    </location>
</feature>
<feature type="site" description="Cleavage; by ACE" evidence="1">
    <location>
        <begin position="28"/>
        <end position="29"/>
    </location>
</feature>
<feature type="site" description="Cleavage; by ACE" evidence="1">
    <location>
        <begin position="30"/>
        <end position="31"/>
    </location>
</feature>
<feature type="site" description="Cleavage; by ACE" evidence="1">
    <location>
        <begin position="33"/>
        <end position="34"/>
    </location>
</feature>
<feature type="modified residue" description="Pyrrolidone carboxylic acid" evidence="2">
    <location>
        <position position="24"/>
    </location>
</feature>
<feature type="modified residue" description="Glycine amide" evidence="2">
    <location>
        <position position="33"/>
    </location>
</feature>
<organism>
    <name type="scientific">Sus scrofa</name>
    <name type="common">Pig</name>
    <dbReference type="NCBI Taxonomy" id="9823"/>
    <lineage>
        <taxon>Eukaryota</taxon>
        <taxon>Metazoa</taxon>
        <taxon>Chordata</taxon>
        <taxon>Craniata</taxon>
        <taxon>Vertebrata</taxon>
        <taxon>Euteleostomi</taxon>
        <taxon>Mammalia</taxon>
        <taxon>Eutheria</taxon>
        <taxon>Laurasiatheria</taxon>
        <taxon>Artiodactyla</taxon>
        <taxon>Suina</taxon>
        <taxon>Suidae</taxon>
        <taxon>Sus</taxon>
    </lineage>
</organism>
<comment type="function">
    <text>Stimulates the secretion of gonadotropins; it stimulates the secretion of both luteinizing and follicle-stimulating hormones.</text>
</comment>
<comment type="subcellular location">
    <subcellularLocation>
        <location>Secreted</location>
    </subcellularLocation>
</comment>
<comment type="PTM">
    <molecule>Gonadoliberin-1</molecule>
    <text evidence="1">The precursor is cleaved by ACE, which removes the Gly-Lys-Arg peptide at the C-terminus, leading to mature hormone. The mature form of Gonadoliberin-1 is also cleaved and degraded by ACE.</text>
</comment>
<comment type="similarity">
    <text evidence="3">Belongs to the GnRH family.</text>
</comment>
<protein>
    <recommendedName>
        <fullName>Progonadoliberin-1</fullName>
    </recommendedName>
    <alternativeName>
        <fullName>Progonadoliberin I</fullName>
    </alternativeName>
    <component>
        <recommendedName>
            <fullName>Gonadoliberin-1</fullName>
        </recommendedName>
        <alternativeName>
            <fullName>Gonadoliberin I</fullName>
        </alternativeName>
        <alternativeName>
            <fullName>Gonadotropin-releasing hormone I</fullName>
            <shortName>GnRH-I</shortName>
        </alternativeName>
        <alternativeName>
            <fullName>Luliberin I</fullName>
        </alternativeName>
        <alternativeName>
            <fullName>Luteinizing hormone-releasing hormone I</fullName>
            <shortName>LH-RH I</shortName>
        </alternativeName>
    </component>
    <component>
        <recommendedName>
            <fullName>GnRH-associated peptide 1</fullName>
        </recommendedName>
        <alternativeName>
            <fullName>GnRH-associated peptide I</fullName>
        </alternativeName>
    </component>
</protein>
<proteinExistence type="evidence at protein level"/>